<dbReference type="EMBL" id="AY147458">
    <property type="protein sequence ID" value="AAN31985.1"/>
    <property type="molecule type" value="Genomic_DNA"/>
</dbReference>
<dbReference type="RefSeq" id="YP_009116388.1">
    <property type="nucleotide sequence ID" value="NC_026220.1"/>
</dbReference>
<dbReference type="RefSeq" id="YP_009116401.1">
    <property type="nucleotide sequence ID" value="NC_026220.1"/>
</dbReference>
<dbReference type="SMR" id="Q67IL8"/>
<dbReference type="GeneID" id="22909393"/>
<dbReference type="GeneID" id="22909501"/>
<dbReference type="OrthoDB" id="607010at2759"/>
<dbReference type="Proteomes" id="UP000515123">
    <property type="component" value="Chloroplast Pltd"/>
</dbReference>
<dbReference type="GO" id="GO:0009507">
    <property type="term" value="C:chloroplast"/>
    <property type="evidence" value="ECO:0007669"/>
    <property type="project" value="UniProtKB-SubCell"/>
</dbReference>
<dbReference type="GO" id="GO:0015935">
    <property type="term" value="C:small ribosomal subunit"/>
    <property type="evidence" value="ECO:0007669"/>
    <property type="project" value="InterPro"/>
</dbReference>
<dbReference type="GO" id="GO:0019843">
    <property type="term" value="F:rRNA binding"/>
    <property type="evidence" value="ECO:0007669"/>
    <property type="project" value="UniProtKB-UniRule"/>
</dbReference>
<dbReference type="GO" id="GO:0003735">
    <property type="term" value="F:structural constituent of ribosome"/>
    <property type="evidence" value="ECO:0007669"/>
    <property type="project" value="InterPro"/>
</dbReference>
<dbReference type="GO" id="GO:0006412">
    <property type="term" value="P:translation"/>
    <property type="evidence" value="ECO:0007669"/>
    <property type="project" value="UniProtKB-UniRule"/>
</dbReference>
<dbReference type="CDD" id="cd14871">
    <property type="entry name" value="uS7_Chloroplast"/>
    <property type="match status" value="1"/>
</dbReference>
<dbReference type="FunFam" id="1.10.455.10:FF:000001">
    <property type="entry name" value="30S ribosomal protein S7"/>
    <property type="match status" value="1"/>
</dbReference>
<dbReference type="Gene3D" id="1.10.455.10">
    <property type="entry name" value="Ribosomal protein S7 domain"/>
    <property type="match status" value="1"/>
</dbReference>
<dbReference type="HAMAP" id="MF_00480_B">
    <property type="entry name" value="Ribosomal_uS7_B"/>
    <property type="match status" value="1"/>
</dbReference>
<dbReference type="InterPro" id="IPR000235">
    <property type="entry name" value="Ribosomal_uS7"/>
</dbReference>
<dbReference type="InterPro" id="IPR005717">
    <property type="entry name" value="Ribosomal_uS7_bac/org-type"/>
</dbReference>
<dbReference type="InterPro" id="IPR020606">
    <property type="entry name" value="Ribosomal_uS7_CS"/>
</dbReference>
<dbReference type="InterPro" id="IPR023798">
    <property type="entry name" value="Ribosomal_uS7_dom"/>
</dbReference>
<dbReference type="InterPro" id="IPR036823">
    <property type="entry name" value="Ribosomal_uS7_dom_sf"/>
</dbReference>
<dbReference type="NCBIfam" id="TIGR01029">
    <property type="entry name" value="rpsG_bact"/>
    <property type="match status" value="1"/>
</dbReference>
<dbReference type="PANTHER" id="PTHR11205">
    <property type="entry name" value="RIBOSOMAL PROTEIN S7"/>
    <property type="match status" value="1"/>
</dbReference>
<dbReference type="Pfam" id="PF00177">
    <property type="entry name" value="Ribosomal_S7"/>
    <property type="match status" value="1"/>
</dbReference>
<dbReference type="PIRSF" id="PIRSF002122">
    <property type="entry name" value="RPS7p_RPS7a_RPS5e_RPS7o"/>
    <property type="match status" value="1"/>
</dbReference>
<dbReference type="SUPFAM" id="SSF47973">
    <property type="entry name" value="Ribosomal protein S7"/>
    <property type="match status" value="1"/>
</dbReference>
<dbReference type="PROSITE" id="PS00052">
    <property type="entry name" value="RIBOSOMAL_S7"/>
    <property type="match status" value="1"/>
</dbReference>
<gene>
    <name type="primary">rps7</name>
</gene>
<proteinExistence type="inferred from homology"/>
<geneLocation type="chloroplast"/>
<comment type="function">
    <text evidence="1">One of the primary rRNA binding proteins, it binds directly to 16S rRNA where it nucleates assembly of the head domain of the 30S subunit.</text>
</comment>
<comment type="subunit">
    <text>Part of the 30S ribosomal subunit.</text>
</comment>
<comment type="subcellular location">
    <subcellularLocation>
        <location>Plastid</location>
        <location>Chloroplast</location>
    </subcellularLocation>
</comment>
<comment type="similarity">
    <text evidence="2">Belongs to the universal ribosomal protein uS7 family.</text>
</comment>
<evidence type="ECO:0000250" key="1"/>
<evidence type="ECO:0000305" key="2"/>
<feature type="chain" id="PRO_0000124423" description="Small ribosomal subunit protein uS7c">
    <location>
        <begin position="1"/>
        <end position="155"/>
    </location>
</feature>
<keyword id="KW-0150">Chloroplast</keyword>
<keyword id="KW-0934">Plastid</keyword>
<keyword id="KW-0687">Ribonucleoprotein</keyword>
<keyword id="KW-0689">Ribosomal protein</keyword>
<keyword id="KW-0694">RNA-binding</keyword>
<keyword id="KW-0699">rRNA-binding</keyword>
<sequence>MSRRGTAEEKTPKSDPIYRNRLVNMLVNRIMKHGKKSLAYQIIYRAVKKIQQKTETNPLSVLRQAIRGVTPDIAVKARRVGGSTHQVPIEIGSTQGKALAIRWLLGASRKRPGRNMAFKLSSELVDAAKGSGDAIRKKEETHRMAEANRAFAHFR</sequence>
<organism>
    <name type="scientific">Ananas comosus</name>
    <name type="common">Pineapple</name>
    <name type="synonym">Ananas ananas</name>
    <dbReference type="NCBI Taxonomy" id="4615"/>
    <lineage>
        <taxon>Eukaryota</taxon>
        <taxon>Viridiplantae</taxon>
        <taxon>Streptophyta</taxon>
        <taxon>Embryophyta</taxon>
        <taxon>Tracheophyta</taxon>
        <taxon>Spermatophyta</taxon>
        <taxon>Magnoliopsida</taxon>
        <taxon>Liliopsida</taxon>
        <taxon>Poales</taxon>
        <taxon>Bromeliaceae</taxon>
        <taxon>Bromelioideae</taxon>
        <taxon>Ananas</taxon>
    </lineage>
</organism>
<name>RR7_ANACO</name>
<reference key="1">
    <citation type="submission" date="2002-09" db="EMBL/GenBank/DDBJ databases">
        <title>Phylogenetic relationships among the major lineages of Asparagales based on a large chloroplast data set.</title>
        <authorList>
            <person name="McPherson M.A."/>
            <person name="Rai H.S."/>
            <person name="Wong W.A."/>
            <person name="Graham S.W."/>
        </authorList>
    </citation>
    <scope>NUCLEOTIDE SEQUENCE [GENOMIC DNA]</scope>
</reference>
<protein>
    <recommendedName>
        <fullName evidence="2">Small ribosomal subunit protein uS7c</fullName>
    </recommendedName>
    <alternativeName>
        <fullName>30S ribosomal protein S7, chloroplastic</fullName>
    </alternativeName>
</protein>
<accession>Q67IL8</accession>